<evidence type="ECO:0000255" key="1">
    <source>
        <dbReference type="HAMAP-Rule" id="MF_01388"/>
    </source>
</evidence>
<accession>Q46HW5</accession>
<sequence>MAFHLLNLFLSAGTSSEAATSSAVGMIGSFLAAGALIVAPAAAALIWVSQKDALSR</sequence>
<keyword id="KW-0472">Membrane</keyword>
<keyword id="KW-0602">Photosynthesis</keyword>
<keyword id="KW-0604">Photosystem II</keyword>
<keyword id="KW-1185">Reference proteome</keyword>
<keyword id="KW-0793">Thylakoid</keyword>
<keyword id="KW-0812">Transmembrane</keyword>
<keyword id="KW-1133">Transmembrane helix</keyword>
<feature type="chain" id="PRO_5000100602" description="Photosystem II reaction center X protein">
    <location>
        <begin position="1"/>
        <end position="56"/>
    </location>
</feature>
<feature type="transmembrane region" description="Helical" evidence="1">
    <location>
        <begin position="27"/>
        <end position="47"/>
    </location>
</feature>
<gene>
    <name evidence="1" type="primary">psbX</name>
    <name type="ordered locus">PMN2A_1425</name>
</gene>
<organism>
    <name type="scientific">Prochlorococcus marinus (strain NATL2A)</name>
    <dbReference type="NCBI Taxonomy" id="59920"/>
    <lineage>
        <taxon>Bacteria</taxon>
        <taxon>Bacillati</taxon>
        <taxon>Cyanobacteriota</taxon>
        <taxon>Cyanophyceae</taxon>
        <taxon>Synechococcales</taxon>
        <taxon>Prochlorococcaceae</taxon>
        <taxon>Prochlorococcus</taxon>
    </lineage>
</organism>
<protein>
    <recommendedName>
        <fullName evidence="1">Photosystem II reaction center X protein</fullName>
    </recommendedName>
</protein>
<comment type="function">
    <text evidence="1">Involved in the binding and/or turnover of quinones at the Q(B) site of Photosystem II.</text>
</comment>
<comment type="subunit">
    <text evidence="1">PSII consists of a core antenna complex that captures photons, and an electron transfer chain that converts photonic excitation into a charge separation. PSII forms dimeric complexes.</text>
</comment>
<comment type="subcellular location">
    <subcellularLocation>
        <location evidence="1">Cellular thylakoid membrane</location>
        <topology evidence="1">Single-pass membrane protein</topology>
    </subcellularLocation>
</comment>
<comment type="similarity">
    <text evidence="1">Belongs to the PsbX family. Type 2 subfamily.</text>
</comment>
<name>PSBX_PROMT</name>
<reference key="1">
    <citation type="journal article" date="2007" name="PLoS Genet.">
        <title>Patterns and implications of gene gain and loss in the evolution of Prochlorococcus.</title>
        <authorList>
            <person name="Kettler G.C."/>
            <person name="Martiny A.C."/>
            <person name="Huang K."/>
            <person name="Zucker J."/>
            <person name="Coleman M.L."/>
            <person name="Rodrigue S."/>
            <person name="Chen F."/>
            <person name="Lapidus A."/>
            <person name="Ferriera S."/>
            <person name="Johnson J."/>
            <person name="Steglich C."/>
            <person name="Church G.M."/>
            <person name="Richardson P."/>
            <person name="Chisholm S.W."/>
        </authorList>
    </citation>
    <scope>NUCLEOTIDE SEQUENCE [LARGE SCALE GENOMIC DNA]</scope>
    <source>
        <strain>NATL2A</strain>
    </source>
</reference>
<dbReference type="EMBL" id="CP000095">
    <property type="protein sequence ID" value="AAZ58913.1"/>
    <property type="molecule type" value="Genomic_DNA"/>
</dbReference>
<dbReference type="RefSeq" id="WP_011294057.1">
    <property type="nucleotide sequence ID" value="NC_007335.2"/>
</dbReference>
<dbReference type="SMR" id="Q46HW5"/>
<dbReference type="STRING" id="59920.PMN2A_1425"/>
<dbReference type="KEGG" id="pmn:PMN2A_1425"/>
<dbReference type="HOGENOM" id="CLU_209178_0_0_3"/>
<dbReference type="Proteomes" id="UP000002535">
    <property type="component" value="Chromosome"/>
</dbReference>
<dbReference type="GO" id="GO:0009523">
    <property type="term" value="C:photosystem II"/>
    <property type="evidence" value="ECO:0007669"/>
    <property type="project" value="UniProtKB-KW"/>
</dbReference>
<dbReference type="GO" id="GO:0031676">
    <property type="term" value="C:plasma membrane-derived thylakoid membrane"/>
    <property type="evidence" value="ECO:0007669"/>
    <property type="project" value="UniProtKB-SubCell"/>
</dbReference>
<dbReference type="GO" id="GO:0015979">
    <property type="term" value="P:photosynthesis"/>
    <property type="evidence" value="ECO:0007669"/>
    <property type="project" value="UniProtKB-KW"/>
</dbReference>
<dbReference type="HAMAP" id="MF_01388">
    <property type="entry name" value="PSII_PsbX_2"/>
    <property type="match status" value="1"/>
</dbReference>
<dbReference type="InterPro" id="IPR009518">
    <property type="entry name" value="PSII_PsbX"/>
</dbReference>
<dbReference type="InterPro" id="IPR023428">
    <property type="entry name" value="PSII_PsbX_type_2_subfam"/>
</dbReference>
<dbReference type="Pfam" id="PF06596">
    <property type="entry name" value="PsbX"/>
    <property type="match status" value="1"/>
</dbReference>
<proteinExistence type="inferred from homology"/>